<organism>
    <name type="scientific">Neomonachus schauinslandi</name>
    <name type="common">Hawaiian monk seal</name>
    <name type="synonym">Monachus schauinslandi</name>
    <dbReference type="NCBI Taxonomy" id="29088"/>
    <lineage>
        <taxon>Eukaryota</taxon>
        <taxon>Metazoa</taxon>
        <taxon>Chordata</taxon>
        <taxon>Craniata</taxon>
        <taxon>Vertebrata</taxon>
        <taxon>Euteleostomi</taxon>
        <taxon>Mammalia</taxon>
        <taxon>Eutheria</taxon>
        <taxon>Laurasiatheria</taxon>
        <taxon>Carnivora</taxon>
        <taxon>Caniformia</taxon>
        <taxon>Pinnipedia</taxon>
        <taxon>Phocidae</taxon>
        <taxon>Monachinae</taxon>
        <taxon>Monachini</taxon>
        <taxon>Neomonachus</taxon>
    </lineage>
</organism>
<accession>A0A2Y9GES1</accession>
<evidence type="ECO:0000250" key="1">
    <source>
        <dbReference type="UniProtKB" id="P02652"/>
    </source>
</evidence>
<evidence type="ECO:0000255" key="2"/>
<evidence type="ECO:0000305" key="3"/>
<name>APOA2_NEOSC</name>
<dbReference type="EMBL" id="NINY01007789">
    <property type="status" value="NOT_ANNOTATED_CDS"/>
    <property type="molecule type" value="Genomic_DNA"/>
</dbReference>
<dbReference type="RefSeq" id="XP_021537553.1">
    <property type="nucleotide sequence ID" value="XM_021681878.1"/>
</dbReference>
<dbReference type="SMR" id="A0A2Y9GES1"/>
<dbReference type="FunCoup" id="A0A2Y9GES1">
    <property type="interactions" value="17"/>
</dbReference>
<dbReference type="GeneID" id="110573388"/>
<dbReference type="InParanoid" id="A0A2Y9GES1"/>
<dbReference type="Proteomes" id="UP000248481">
    <property type="component" value="Chromosome 6"/>
</dbReference>
<dbReference type="GO" id="GO:0034366">
    <property type="term" value="C:spherical high-density lipoprotein particle"/>
    <property type="evidence" value="ECO:0007669"/>
    <property type="project" value="TreeGrafter"/>
</dbReference>
<dbReference type="GO" id="GO:0120020">
    <property type="term" value="F:cholesterol transfer activity"/>
    <property type="evidence" value="ECO:0007669"/>
    <property type="project" value="TreeGrafter"/>
</dbReference>
<dbReference type="GO" id="GO:0008035">
    <property type="term" value="F:high-density lipoprotein particle binding"/>
    <property type="evidence" value="ECO:0007669"/>
    <property type="project" value="TreeGrafter"/>
</dbReference>
<dbReference type="GO" id="GO:0008289">
    <property type="term" value="F:lipid binding"/>
    <property type="evidence" value="ECO:0007669"/>
    <property type="project" value="InterPro"/>
</dbReference>
<dbReference type="GO" id="GO:0042632">
    <property type="term" value="P:cholesterol homeostasis"/>
    <property type="evidence" value="ECO:0007669"/>
    <property type="project" value="TreeGrafter"/>
</dbReference>
<dbReference type="GO" id="GO:0030301">
    <property type="term" value="P:cholesterol transport"/>
    <property type="evidence" value="ECO:0007669"/>
    <property type="project" value="TreeGrafter"/>
</dbReference>
<dbReference type="GO" id="GO:0042157">
    <property type="term" value="P:lipoprotein metabolic process"/>
    <property type="evidence" value="ECO:0007669"/>
    <property type="project" value="InterPro"/>
</dbReference>
<dbReference type="Gene3D" id="6.10.250.100">
    <property type="match status" value="1"/>
</dbReference>
<dbReference type="InterPro" id="IPR006801">
    <property type="entry name" value="ApoA-II"/>
</dbReference>
<dbReference type="InterPro" id="IPR036172">
    <property type="entry name" value="ApoA-II_sf"/>
</dbReference>
<dbReference type="PANTHER" id="PTHR11027">
    <property type="entry name" value="APOLIPOPROTEIN A-II"/>
    <property type="match status" value="1"/>
</dbReference>
<dbReference type="PANTHER" id="PTHR11027:SF0">
    <property type="entry name" value="APOLIPOPROTEIN A-II"/>
    <property type="match status" value="1"/>
</dbReference>
<dbReference type="Pfam" id="PF04711">
    <property type="entry name" value="ApoA-II"/>
    <property type="match status" value="1"/>
</dbReference>
<dbReference type="SUPFAM" id="SSF82936">
    <property type="entry name" value="Apolipoprotein A-II"/>
    <property type="match status" value="1"/>
</dbReference>
<reference key="1">
    <citation type="submission" date="2017-05" db="EMBL/GenBank/DDBJ databases">
        <title>Improved de novo genome assembly: linked-read sequencing combined with optical mapping produce a high quality mammalian genome at relatively low cost.</title>
        <authorList>
            <person name="Mohr D.W."/>
            <person name="Scott A.F."/>
        </authorList>
    </citation>
    <scope>NUCLEOTIDE SEQUENCE [LARGE SCALE GENOMIC DNA]</scope>
    <source>
        <tissue>Blood</tissue>
    </source>
</reference>
<reference key="2">
    <citation type="unpublished observations" date="2019-09">
        <authorList>
            <person name="Puppione D.L."/>
        </authorList>
    </citation>
    <scope>IDENTIFICATION</scope>
</reference>
<keyword id="KW-0165">Cleavage on pair of basic residues</keyword>
<keyword id="KW-0345">HDL</keyword>
<keyword id="KW-0445">Lipid transport</keyword>
<keyword id="KW-0558">Oxidation</keyword>
<keyword id="KW-0597">Phosphoprotein</keyword>
<keyword id="KW-0873">Pyrrolidone carboxylic acid</keyword>
<keyword id="KW-1185">Reference proteome</keyword>
<keyword id="KW-0964">Secreted</keyword>
<keyword id="KW-0732">Signal</keyword>
<keyword id="KW-0813">Transport</keyword>
<gene>
    <name type="primary">APOA2</name>
</gene>
<sequence length="100" mass="11179">MKLLALAVLLLAVCSLEGAFVRRQAEEPNLQSLVAQYFQTMTDYGKDLVEKAKGPELQAQAKAYFEKTQEQLTPLVKKAGTDLINFLSNFMDLRTQPATQ</sequence>
<protein>
    <recommendedName>
        <fullName>Apolipoprotein A-II</fullName>
        <shortName>Apo-AII</shortName>
        <shortName>ApoA-II</shortName>
    </recommendedName>
    <alternativeName>
        <fullName>Apolipoprotein A2</fullName>
    </alternativeName>
    <component>
        <recommendedName>
            <fullName>Proapolipoprotein A-II</fullName>
            <shortName>ProapoA-II</shortName>
        </recommendedName>
    </component>
    <component>
        <recommendedName>
            <fullName>Truncated apolipoprotein A-II</fullName>
        </recommendedName>
    </component>
</protein>
<feature type="signal peptide" evidence="2">
    <location>
        <begin position="1"/>
        <end position="18"/>
    </location>
</feature>
<feature type="chain" id="PRO_5015868306" description="Proapolipoprotein A-II">
    <location>
        <begin position="19"/>
        <end position="100"/>
    </location>
</feature>
<feature type="chain" id="PRO_0000448519" description="Apolipoprotein A-II" evidence="1">
    <location>
        <begin position="24"/>
        <end position="100"/>
    </location>
</feature>
<feature type="chain" id="PRO_0000448520" description="Truncated apolipoprotein A-II" evidence="1">
    <location>
        <begin position="24"/>
        <end position="99"/>
    </location>
</feature>
<feature type="modified residue" description="Pyrrolidone carboxylic acid" evidence="1">
    <location>
        <position position="24"/>
    </location>
</feature>
<proteinExistence type="inferred from homology"/>
<comment type="function">
    <text>May stabilize HDL (high density lipoprotein) structure by its association with lipids, and affect the HDL metabolism.</text>
</comment>
<comment type="subunit">
    <text evidence="1">Monomer. Interacts with NAXE and NDRG1 (By similarity).</text>
</comment>
<comment type="subcellular location">
    <subcellularLocation>
        <location evidence="1">Secreted</location>
    </subcellularLocation>
</comment>
<comment type="similarity">
    <text evidence="3">Belongs to the apolipoprotein A2 family.</text>
</comment>